<sequence>MWREKGNAIGNWLLAITAIFGFITLIWIPQASAECQTRSIYCYECDSWTDARCKDPFNYTALPRDQPPLMTCNGCCVKMVRHQRSRYEVVRRMCTSQLQINLFMVDHVCMMESSGNGHMCFCEEDMCNSSKDLYSHGHQLHLIITIAVAVSWLMGQLLNR</sequence>
<name>QVR_DROPE</name>
<protein>
    <recommendedName>
        <fullName evidence="1">UPAR/Ly6 domain-containing protein qvr</fullName>
    </recommendedName>
    <alternativeName>
        <fullName evidence="1">Protein quiver</fullName>
    </alternativeName>
    <alternativeName>
        <fullName evidence="1">Protein sleepless</fullName>
    </alternativeName>
</protein>
<reference evidence="5" key="1">
    <citation type="journal article" date="2007" name="Nature">
        <title>Evolution of genes and genomes on the Drosophila phylogeny.</title>
        <authorList>
            <consortium name="Drosophila 12 genomes consortium"/>
        </authorList>
    </citation>
    <scope>NUCLEOTIDE SEQUENCE [LARGE SCALE GENOMIC DNA]</scope>
    <source>
        <strain>MSH-3 / Tucson 14011-0111.49</strain>
    </source>
</reference>
<accession>B4GAN3</accession>
<comment type="function">
    <text evidence="1">Bifunctional regulator of neuronal activity in the mushroom body, and possibly other regions of the brain, that acts as a signaling molecule required for homeostatic regulation of sleep under normal conditions and after sleep deprivation. Reduces neuronal excitability by enhancing Sh/shaker K(+) channel activity; possibly by stabilizing Sh/shaker to increase protein levels, accelerating its activation kinetics, slowing C-type inactivation and enhancing recovery from inactivation. Specifically affects the A-type K(+) current. Antagonizes nicotinic acetylcholine receptors (nAChRs) to reduce synaptic transmission, possibly by preventing their localization to the cell surface. Required for regulation of neuromuscular excitability and plasticity at neuromuscular junctions.</text>
</comment>
<comment type="subunit">
    <text evidence="1">Interacts (via loop 2 of the three-fingered Ly-6 domain) with Sh/shaker; this interaction may stabilize both components of the complex and may be required for targeting or retention of Sh/shaker to neural cell projections. Interacts (via loop 2 of the three-fingered Ly-6 domain) with nAChRalpha3 and potentially other nicotinic acetylcholine receptors; this interaction is required for antagonism of nicotinic acetylcholine receptors.</text>
</comment>
<comment type="subcellular location">
    <subcellularLocation>
        <location evidence="1">Cell membrane</location>
        <topology evidence="1">Lipid-anchor</topology>
        <topology evidence="1">GPI-anchor</topology>
        <orientation evidence="1">Extracellular side</orientation>
    </subcellularLocation>
    <subcellularLocation>
        <location evidence="1">Membrane raft</location>
        <topology evidence="1">Lipid-anchor</topology>
        <topology evidence="1">GPI-anchor</topology>
        <orientation evidence="1">Extracellular side</orientation>
    </subcellularLocation>
</comment>
<comment type="tissue specificity">
    <text evidence="1">Expressed in mushroom body (at protein level); overlaps with expression of Sh/shaker and nicotinic acetylcholine receptor (nAChR) components also involved in sleep regulation. Expressed in the adult brain and head. Enriched in the mushroom body, anterior optic tubercle, superior protocerebrum, antennal nerve and visual projection neuron fibers projecting into the lobula plate of the optic lobe.</text>
</comment>
<comment type="domain">
    <text evidence="1">Consists of a single Ly-6 domain, adopting a three finger fold stabilized by 5 disulfide bonds. The first loop contains a region essential for protein folding or that is required for localization to the cell surface. The second loop mediates protein-protein interactions.</text>
</comment>
<comment type="PTM">
    <text evidence="1">N-glycosylated probably on Asn-58.</text>
</comment>
<comment type="similarity">
    <text evidence="4">Belongs to the quiver family.</text>
</comment>
<comment type="sequence caution" evidence="4">
    <conflict type="erroneous gene model prediction">
        <sequence resource="EMBL-CDS" id="EDW31985"/>
    </conflict>
</comment>
<feature type="signal peptide" evidence="2">
    <location>
        <begin position="1"/>
        <end position="33"/>
    </location>
</feature>
<feature type="chain" id="PRO_0000365464" description="UPAR/Ly6 domain-containing protein qvr" evidence="2">
    <location>
        <begin position="34"/>
        <end position="128"/>
    </location>
</feature>
<feature type="propeptide" id="PRO_0000365465" description="Removed in mature form" evidence="1">
    <location>
        <begin position="129"/>
        <end position="160"/>
    </location>
</feature>
<feature type="transmembrane region" description="Helical" evidence="2">
    <location>
        <begin position="138"/>
        <end position="158"/>
    </location>
</feature>
<feature type="region of interest" description="Loop 1; may be required for cell surface localization or be essential for protein folding" evidence="1">
    <location>
        <begin position="55"/>
        <end position="68"/>
    </location>
</feature>
<feature type="region of interest" description="Loop 2; required for interaction with Sh/shaker and nAChRalpha3/Nicotinic acetylcholine receptor alpha3" evidence="1">
    <location>
        <begin position="78"/>
        <end position="92"/>
    </location>
</feature>
<feature type="lipid moiety-binding region" description="GPI-anchor amidated asparagine" evidence="1">
    <location>
        <position position="128"/>
    </location>
</feature>
<feature type="glycosylation site" description="N-linked (GlcNAc...) asparagine" evidence="1 3">
    <location>
        <position position="58"/>
    </location>
</feature>
<feature type="disulfide bond" evidence="1">
    <location>
        <begin position="42"/>
        <end position="76"/>
    </location>
</feature>
<feature type="disulfide bond" evidence="1">
    <location>
        <begin position="45"/>
        <end position="53"/>
    </location>
</feature>
<feature type="disulfide bond" evidence="1">
    <location>
        <begin position="72"/>
        <end position="94"/>
    </location>
</feature>
<feature type="disulfide bond" evidence="1">
    <location>
        <begin position="109"/>
        <end position="120"/>
    </location>
</feature>
<feature type="disulfide bond" evidence="1">
    <location>
        <begin position="122"/>
        <end position="127"/>
    </location>
</feature>
<keyword id="KW-0090">Biological rhythms</keyword>
<keyword id="KW-1003">Cell membrane</keyword>
<keyword id="KW-1015">Disulfide bond</keyword>
<keyword id="KW-0325">Glycoprotein</keyword>
<keyword id="KW-0336">GPI-anchor</keyword>
<keyword id="KW-0449">Lipoprotein</keyword>
<keyword id="KW-0472">Membrane</keyword>
<keyword id="KW-1185">Reference proteome</keyword>
<keyword id="KW-0732">Signal</keyword>
<keyword id="KW-0812">Transmembrane</keyword>
<keyword id="KW-1133">Transmembrane helix</keyword>
<dbReference type="EMBL" id="CH479181">
    <property type="protein sequence ID" value="EDW31985.1"/>
    <property type="status" value="ALT_SEQ"/>
    <property type="molecule type" value="Genomic_DNA"/>
</dbReference>
<dbReference type="RefSeq" id="XP_002016095.1">
    <property type="nucleotide sequence ID" value="XM_002016059.1"/>
</dbReference>
<dbReference type="STRING" id="7234.B4GAN3"/>
<dbReference type="GlyCosmos" id="B4GAN3">
    <property type="glycosylation" value="1 site, No reported glycans"/>
</dbReference>
<dbReference type="EnsemblMetazoa" id="FBtr0177026">
    <property type="protein sequence ID" value="FBpp0175518"/>
    <property type="gene ID" value="FBgn0149020"/>
</dbReference>
<dbReference type="OrthoDB" id="9991292at2759"/>
<dbReference type="ChiTaRS" id="qvr">
    <property type="organism name" value="fly"/>
</dbReference>
<dbReference type="Proteomes" id="UP000008744">
    <property type="component" value="Unassembled WGS sequence"/>
</dbReference>
<dbReference type="GO" id="GO:0045121">
    <property type="term" value="C:membrane raft"/>
    <property type="evidence" value="ECO:0007669"/>
    <property type="project" value="UniProtKB-SubCell"/>
</dbReference>
<dbReference type="GO" id="GO:0005886">
    <property type="term" value="C:plasma membrane"/>
    <property type="evidence" value="ECO:0000250"/>
    <property type="project" value="UniProtKB"/>
</dbReference>
<dbReference type="GO" id="GO:0098552">
    <property type="term" value="C:side of membrane"/>
    <property type="evidence" value="ECO:0007669"/>
    <property type="project" value="UniProtKB-KW"/>
</dbReference>
<dbReference type="GO" id="GO:0034235">
    <property type="term" value="F:GPI anchor binding"/>
    <property type="evidence" value="ECO:0000250"/>
    <property type="project" value="UniProtKB"/>
</dbReference>
<dbReference type="GO" id="GO:0045187">
    <property type="term" value="P:regulation of circadian sleep/wake cycle, sleep"/>
    <property type="evidence" value="ECO:0000250"/>
    <property type="project" value="UniProtKB"/>
</dbReference>
<dbReference type="GO" id="GO:0032222">
    <property type="term" value="P:regulation of synaptic transmission, cholinergic"/>
    <property type="evidence" value="ECO:0007669"/>
    <property type="project" value="InterPro"/>
</dbReference>
<dbReference type="GO" id="GO:0048511">
    <property type="term" value="P:rhythmic process"/>
    <property type="evidence" value="ECO:0007669"/>
    <property type="project" value="UniProtKB-KW"/>
</dbReference>
<dbReference type="GO" id="GO:0030431">
    <property type="term" value="P:sleep"/>
    <property type="evidence" value="ECO:0007669"/>
    <property type="project" value="InterPro"/>
</dbReference>
<dbReference type="CDD" id="cd23595">
    <property type="entry name" value="TFP_LU_ECD_Qvr"/>
    <property type="match status" value="1"/>
</dbReference>
<dbReference type="InterPro" id="IPR031424">
    <property type="entry name" value="QVR-like"/>
</dbReference>
<dbReference type="InterPro" id="IPR050975">
    <property type="entry name" value="Sleep_regulator"/>
</dbReference>
<dbReference type="PANTHER" id="PTHR33562">
    <property type="entry name" value="ATILLA, ISOFORM B-RELATED-RELATED"/>
    <property type="match status" value="1"/>
</dbReference>
<dbReference type="PANTHER" id="PTHR33562:SF31">
    <property type="entry name" value="PROTEIN QUIVER"/>
    <property type="match status" value="1"/>
</dbReference>
<dbReference type="Pfam" id="PF17064">
    <property type="entry name" value="QVR"/>
    <property type="match status" value="1"/>
</dbReference>
<gene>
    <name evidence="1" type="primary">qvr</name>
    <name evidence="1" type="synonym">sss</name>
    <name type="ORF">GL11411</name>
</gene>
<proteinExistence type="inferred from homology"/>
<evidence type="ECO:0000250" key="1">
    <source>
        <dbReference type="UniProtKB" id="B5A5T4"/>
    </source>
</evidence>
<evidence type="ECO:0000255" key="2"/>
<evidence type="ECO:0000255" key="3">
    <source>
        <dbReference type="PROSITE-ProRule" id="PRU00498"/>
    </source>
</evidence>
<evidence type="ECO:0000305" key="4"/>
<evidence type="ECO:0000312" key="5">
    <source>
        <dbReference type="EMBL" id="EDW31985.1"/>
    </source>
</evidence>
<organism>
    <name type="scientific">Drosophila persimilis</name>
    <name type="common">Fruit fly</name>
    <dbReference type="NCBI Taxonomy" id="7234"/>
    <lineage>
        <taxon>Eukaryota</taxon>
        <taxon>Metazoa</taxon>
        <taxon>Ecdysozoa</taxon>
        <taxon>Arthropoda</taxon>
        <taxon>Hexapoda</taxon>
        <taxon>Insecta</taxon>
        <taxon>Pterygota</taxon>
        <taxon>Neoptera</taxon>
        <taxon>Endopterygota</taxon>
        <taxon>Diptera</taxon>
        <taxon>Brachycera</taxon>
        <taxon>Muscomorpha</taxon>
        <taxon>Ephydroidea</taxon>
        <taxon>Drosophilidae</taxon>
        <taxon>Drosophila</taxon>
        <taxon>Sophophora</taxon>
    </lineage>
</organism>